<feature type="chain" id="PRO_0000245289" description="Uncharacterized protein YOR342C">
    <location>
        <begin position="1"/>
        <end position="319"/>
    </location>
</feature>
<feature type="region of interest" description="Disordered" evidence="1">
    <location>
        <begin position="281"/>
        <end position="319"/>
    </location>
</feature>
<feature type="compositionally biased region" description="Polar residues" evidence="1">
    <location>
        <begin position="299"/>
        <end position="308"/>
    </location>
</feature>
<name>YO342_YEAST</name>
<reference key="1">
    <citation type="journal article" date="1996" name="Yeast">
        <title>Nucleotide sequence analysis of a 40 kb segment on the right arm of yeast chromosome XV reveals 18 open reading frames including a new pyruvate kinase and three homologues to chromosome I genes.</title>
        <authorList>
            <person name="Purnelle B."/>
            <person name="Goffeau A."/>
        </authorList>
    </citation>
    <scope>NUCLEOTIDE SEQUENCE [GENOMIC DNA]</scope>
    <source>
        <strain>ATCC 96604 / S288c / FY1679</strain>
    </source>
</reference>
<reference key="2">
    <citation type="journal article" date="1997" name="Nature">
        <title>The nucleotide sequence of Saccharomyces cerevisiae chromosome XV.</title>
        <authorList>
            <person name="Dujon B."/>
            <person name="Albermann K."/>
            <person name="Aldea M."/>
            <person name="Alexandraki D."/>
            <person name="Ansorge W."/>
            <person name="Arino J."/>
            <person name="Benes V."/>
            <person name="Bohn C."/>
            <person name="Bolotin-Fukuhara M."/>
            <person name="Bordonne R."/>
            <person name="Boyer J."/>
            <person name="Camasses A."/>
            <person name="Casamayor A."/>
            <person name="Casas C."/>
            <person name="Cheret G."/>
            <person name="Cziepluch C."/>
            <person name="Daignan-Fornier B."/>
            <person name="Dang V.-D."/>
            <person name="de Haan M."/>
            <person name="Delius H."/>
            <person name="Durand P."/>
            <person name="Fairhead C."/>
            <person name="Feldmann H."/>
            <person name="Gaillon L."/>
            <person name="Galisson F."/>
            <person name="Gamo F.-J."/>
            <person name="Gancedo C."/>
            <person name="Goffeau A."/>
            <person name="Goulding S.E."/>
            <person name="Grivell L.A."/>
            <person name="Habbig B."/>
            <person name="Hand N.J."/>
            <person name="Hani J."/>
            <person name="Hattenhorst U."/>
            <person name="Hebling U."/>
            <person name="Hernando Y."/>
            <person name="Herrero E."/>
            <person name="Heumann K."/>
            <person name="Hiesel R."/>
            <person name="Hilger F."/>
            <person name="Hofmann B."/>
            <person name="Hollenberg C.P."/>
            <person name="Hughes B."/>
            <person name="Jauniaux J.-C."/>
            <person name="Kalogeropoulos A."/>
            <person name="Katsoulou C."/>
            <person name="Kordes E."/>
            <person name="Lafuente M.J."/>
            <person name="Landt O."/>
            <person name="Louis E.J."/>
            <person name="Maarse A.C."/>
            <person name="Madania A."/>
            <person name="Mannhaupt G."/>
            <person name="Marck C."/>
            <person name="Martin R.P."/>
            <person name="Mewes H.-W."/>
            <person name="Michaux G."/>
            <person name="Paces V."/>
            <person name="Parle-McDermott A.G."/>
            <person name="Pearson B.M."/>
            <person name="Perrin A."/>
            <person name="Pettersson B."/>
            <person name="Poch O."/>
            <person name="Pohl T.M."/>
            <person name="Poirey R."/>
            <person name="Portetelle D."/>
            <person name="Pujol A."/>
            <person name="Purnelle B."/>
            <person name="Ramezani Rad M."/>
            <person name="Rechmann S."/>
            <person name="Schwager C."/>
            <person name="Schweizer M."/>
            <person name="Sor F."/>
            <person name="Sterky F."/>
            <person name="Tarassov I.A."/>
            <person name="Teodoru C."/>
            <person name="Tettelin H."/>
            <person name="Thierry A."/>
            <person name="Tobiasch E."/>
            <person name="Tzermia M."/>
            <person name="Uhlen M."/>
            <person name="Unseld M."/>
            <person name="Valens M."/>
            <person name="Vandenbol M."/>
            <person name="Vetter I."/>
            <person name="Vlcek C."/>
            <person name="Voet M."/>
            <person name="Volckaert G."/>
            <person name="Voss H."/>
            <person name="Wambutt R."/>
            <person name="Wedler H."/>
            <person name="Wiemann S."/>
            <person name="Winsor B."/>
            <person name="Wolfe K.H."/>
            <person name="Zollner A."/>
            <person name="Zumstein E."/>
            <person name="Kleine K."/>
        </authorList>
    </citation>
    <scope>NUCLEOTIDE SEQUENCE [LARGE SCALE GENOMIC DNA]</scope>
    <source>
        <strain>ATCC 204508 / S288c</strain>
    </source>
</reference>
<reference key="3">
    <citation type="journal article" date="2014" name="G3 (Bethesda)">
        <title>The reference genome sequence of Saccharomyces cerevisiae: Then and now.</title>
        <authorList>
            <person name="Engel S.R."/>
            <person name="Dietrich F.S."/>
            <person name="Fisk D.G."/>
            <person name="Binkley G."/>
            <person name="Balakrishnan R."/>
            <person name="Costanzo M.C."/>
            <person name="Dwight S.S."/>
            <person name="Hitz B.C."/>
            <person name="Karra K."/>
            <person name="Nash R.S."/>
            <person name="Weng S."/>
            <person name="Wong E.D."/>
            <person name="Lloyd P."/>
            <person name="Skrzypek M.S."/>
            <person name="Miyasato S.R."/>
            <person name="Simison M."/>
            <person name="Cherry J.M."/>
        </authorList>
    </citation>
    <scope>GENOME REANNOTATION</scope>
    <source>
        <strain>ATCC 204508 / S288c</strain>
    </source>
</reference>
<reference key="4">
    <citation type="journal article" date="2003" name="Nature">
        <title>Global analysis of protein localization in budding yeast.</title>
        <authorList>
            <person name="Huh W.-K."/>
            <person name="Falvo J.V."/>
            <person name="Gerke L.C."/>
            <person name="Carroll A.S."/>
            <person name="Howson R.W."/>
            <person name="Weissman J.S."/>
            <person name="O'Shea E.K."/>
        </authorList>
    </citation>
    <scope>SUBCELLULAR LOCATION [LARGE SCALE ANALYSIS]</scope>
</reference>
<reference key="5">
    <citation type="journal article" date="2003" name="Nature">
        <title>Global analysis of protein expression in yeast.</title>
        <authorList>
            <person name="Ghaemmaghami S."/>
            <person name="Huh W.-K."/>
            <person name="Bower K."/>
            <person name="Howson R.W."/>
            <person name="Belle A."/>
            <person name="Dephoure N."/>
            <person name="O'Shea E.K."/>
            <person name="Weissman J.S."/>
        </authorList>
    </citation>
    <scope>LEVEL OF PROTEIN EXPRESSION [LARGE SCALE ANALYSIS]</scope>
</reference>
<proteinExistence type="evidence at protein level"/>
<gene>
    <name type="ordered locus">YOR342C</name>
    <name type="ORF">O6283</name>
</gene>
<evidence type="ECO:0000256" key="1">
    <source>
        <dbReference type="SAM" id="MobiDB-lite"/>
    </source>
</evidence>
<evidence type="ECO:0000269" key="2">
    <source>
    </source>
</evidence>
<evidence type="ECO:0000269" key="3">
    <source>
    </source>
</evidence>
<sequence length="319" mass="36908">MTILEELNDSSIPQRLDNHIFFGSVHSLTHTDFLVENNIRFFINVDLSTELISHIYHEVRSKFAHEIVIVNIDNDSQIPIESDLVRSFHWHNTSLLQQLIHHLDFLSGINNHGEPLTPPPESHYRNAYVQFDHPSDSVSILDKLLYGNKSEYSRTNIFQVTNEAKFQVFNDLITIFKYSIAQGGNTNSNILVLSENGSTDENLISLLMSTVLKENPTFNVYQALQFVKSIAVIPDTVRDEKILWVTGFINYQELIKKNEMYWGLGSQKGRKLTSFASPISKVERKQRRRDDQNIMRSKLPQQRQNPFCSTERPKRARCD</sequence>
<comment type="subcellular location">
    <subcellularLocation>
        <location evidence="2">Cytoplasm</location>
    </subcellularLocation>
    <subcellularLocation>
        <location evidence="2">Nucleus</location>
    </subcellularLocation>
</comment>
<comment type="miscellaneous">
    <text evidence="3">Present with 1360 molecules/cell in log phase SD medium.</text>
</comment>
<organism>
    <name type="scientific">Saccharomyces cerevisiae (strain ATCC 204508 / S288c)</name>
    <name type="common">Baker's yeast</name>
    <dbReference type="NCBI Taxonomy" id="559292"/>
    <lineage>
        <taxon>Eukaryota</taxon>
        <taxon>Fungi</taxon>
        <taxon>Dikarya</taxon>
        <taxon>Ascomycota</taxon>
        <taxon>Saccharomycotina</taxon>
        <taxon>Saccharomycetes</taxon>
        <taxon>Saccharomycetales</taxon>
        <taxon>Saccharomycetaceae</taxon>
        <taxon>Saccharomyces</taxon>
    </lineage>
</organism>
<accession>Q12182</accession>
<accession>D6W337</accession>
<dbReference type="EMBL" id="X95720">
    <property type="protein sequence ID" value="CAA65030.1"/>
    <property type="molecule type" value="Genomic_DNA"/>
</dbReference>
<dbReference type="EMBL" id="Z75250">
    <property type="protein sequence ID" value="CAA99666.1"/>
    <property type="molecule type" value="Genomic_DNA"/>
</dbReference>
<dbReference type="EMBL" id="BK006948">
    <property type="protein sequence ID" value="DAA11103.1"/>
    <property type="molecule type" value="Genomic_DNA"/>
</dbReference>
<dbReference type="PIR" id="S67251">
    <property type="entry name" value="S67251"/>
</dbReference>
<dbReference type="RefSeq" id="NP_014987.1">
    <property type="nucleotide sequence ID" value="NM_001183762.1"/>
</dbReference>
<dbReference type="BioGRID" id="34725">
    <property type="interactions" value="28"/>
</dbReference>
<dbReference type="DIP" id="DIP-8914N"/>
<dbReference type="FunCoup" id="Q12182">
    <property type="interactions" value="133"/>
</dbReference>
<dbReference type="IntAct" id="Q12182">
    <property type="interactions" value="2"/>
</dbReference>
<dbReference type="MINT" id="Q12182"/>
<dbReference type="STRING" id="4932.YOR342C"/>
<dbReference type="iPTMnet" id="Q12182"/>
<dbReference type="PaxDb" id="4932-YOR342C"/>
<dbReference type="PeptideAtlas" id="Q12182"/>
<dbReference type="EnsemblFungi" id="YOR342C_mRNA">
    <property type="protein sequence ID" value="YOR342C"/>
    <property type="gene ID" value="YOR342C"/>
</dbReference>
<dbReference type="GeneID" id="854520"/>
<dbReference type="KEGG" id="sce:YOR342C"/>
<dbReference type="AGR" id="SGD:S000005869"/>
<dbReference type="SGD" id="S000005869">
    <property type="gene designation" value="YOR342C"/>
</dbReference>
<dbReference type="VEuPathDB" id="FungiDB:YOR342C"/>
<dbReference type="eggNOG" id="ENOG502S3NH">
    <property type="taxonomic scope" value="Eukaryota"/>
</dbReference>
<dbReference type="GeneTree" id="ENSGT00940000176424"/>
<dbReference type="HOGENOM" id="CLU_071381_0_0_1"/>
<dbReference type="InParanoid" id="Q12182"/>
<dbReference type="OMA" id="DVIMINF"/>
<dbReference type="OrthoDB" id="4069549at2759"/>
<dbReference type="BioCyc" id="YEAST:G3O-33817-MONOMER"/>
<dbReference type="BioGRID-ORCS" id="854520">
    <property type="hits" value="0 hits in 10 CRISPR screens"/>
</dbReference>
<dbReference type="PRO" id="PR:Q12182"/>
<dbReference type="Proteomes" id="UP000002311">
    <property type="component" value="Chromosome XV"/>
</dbReference>
<dbReference type="RNAct" id="Q12182">
    <property type="molecule type" value="protein"/>
</dbReference>
<dbReference type="GO" id="GO:0005737">
    <property type="term" value="C:cytoplasm"/>
    <property type="evidence" value="ECO:0007005"/>
    <property type="project" value="SGD"/>
</dbReference>
<dbReference type="GO" id="GO:0005634">
    <property type="term" value="C:nucleus"/>
    <property type="evidence" value="ECO:0007005"/>
    <property type="project" value="SGD"/>
</dbReference>
<keyword id="KW-0963">Cytoplasm</keyword>
<keyword id="KW-0539">Nucleus</keyword>
<keyword id="KW-1185">Reference proteome</keyword>
<protein>
    <recommendedName>
        <fullName>Uncharacterized protein YOR342C</fullName>
    </recommendedName>
</protein>